<reference key="1">
    <citation type="journal article" date="2008" name="Proc. Natl. Acad. Sci. U.S.A.">
        <title>Nitrogen fixation island and rhizosphere competence traits in the genome of root-associated Pseudomonas stutzeri A1501.</title>
        <authorList>
            <person name="Yan Y."/>
            <person name="Yang J."/>
            <person name="Dou Y."/>
            <person name="Chen M."/>
            <person name="Ping S."/>
            <person name="Peng J."/>
            <person name="Lu W."/>
            <person name="Zhang W."/>
            <person name="Yao Z."/>
            <person name="Li H."/>
            <person name="Liu W."/>
            <person name="He S."/>
            <person name="Geng L."/>
            <person name="Zhang X."/>
            <person name="Yang F."/>
            <person name="Yu H."/>
            <person name="Zhan Y."/>
            <person name="Li D."/>
            <person name="Lin Z."/>
            <person name="Wang Y."/>
            <person name="Elmerich C."/>
            <person name="Lin M."/>
            <person name="Jin Q."/>
        </authorList>
    </citation>
    <scope>NUCLEOTIDE SEQUENCE [LARGE SCALE GENOMIC DNA]</scope>
    <source>
        <strain>A1501</strain>
    </source>
</reference>
<protein>
    <recommendedName>
        <fullName evidence="1">Serine--tRNA ligase</fullName>
        <ecNumber evidence="1">6.1.1.11</ecNumber>
    </recommendedName>
    <alternativeName>
        <fullName evidence="1">Seryl-tRNA synthetase</fullName>
        <shortName evidence="1">SerRS</shortName>
    </alternativeName>
    <alternativeName>
        <fullName evidence="1">Seryl-tRNA(Ser/Sec) synthetase</fullName>
    </alternativeName>
</protein>
<comment type="function">
    <text evidence="1">Catalyzes the attachment of serine to tRNA(Ser). Is also able to aminoacylate tRNA(Sec) with serine, to form the misacylated tRNA L-seryl-tRNA(Sec), which will be further converted into selenocysteinyl-tRNA(Sec).</text>
</comment>
<comment type="catalytic activity">
    <reaction evidence="1">
        <text>tRNA(Ser) + L-serine + ATP = L-seryl-tRNA(Ser) + AMP + diphosphate + H(+)</text>
        <dbReference type="Rhea" id="RHEA:12292"/>
        <dbReference type="Rhea" id="RHEA-COMP:9669"/>
        <dbReference type="Rhea" id="RHEA-COMP:9703"/>
        <dbReference type="ChEBI" id="CHEBI:15378"/>
        <dbReference type="ChEBI" id="CHEBI:30616"/>
        <dbReference type="ChEBI" id="CHEBI:33019"/>
        <dbReference type="ChEBI" id="CHEBI:33384"/>
        <dbReference type="ChEBI" id="CHEBI:78442"/>
        <dbReference type="ChEBI" id="CHEBI:78533"/>
        <dbReference type="ChEBI" id="CHEBI:456215"/>
        <dbReference type="EC" id="6.1.1.11"/>
    </reaction>
</comment>
<comment type="catalytic activity">
    <reaction evidence="1">
        <text>tRNA(Sec) + L-serine + ATP = L-seryl-tRNA(Sec) + AMP + diphosphate + H(+)</text>
        <dbReference type="Rhea" id="RHEA:42580"/>
        <dbReference type="Rhea" id="RHEA-COMP:9742"/>
        <dbReference type="Rhea" id="RHEA-COMP:10128"/>
        <dbReference type="ChEBI" id="CHEBI:15378"/>
        <dbReference type="ChEBI" id="CHEBI:30616"/>
        <dbReference type="ChEBI" id="CHEBI:33019"/>
        <dbReference type="ChEBI" id="CHEBI:33384"/>
        <dbReference type="ChEBI" id="CHEBI:78442"/>
        <dbReference type="ChEBI" id="CHEBI:78533"/>
        <dbReference type="ChEBI" id="CHEBI:456215"/>
        <dbReference type="EC" id="6.1.1.11"/>
    </reaction>
</comment>
<comment type="pathway">
    <text evidence="1">Aminoacyl-tRNA biosynthesis; selenocysteinyl-tRNA(Sec) biosynthesis; L-seryl-tRNA(Sec) from L-serine and tRNA(Sec): step 1/1.</text>
</comment>
<comment type="subunit">
    <text evidence="1">Homodimer. The tRNA molecule binds across the dimer.</text>
</comment>
<comment type="subcellular location">
    <subcellularLocation>
        <location evidence="1">Cytoplasm</location>
    </subcellularLocation>
</comment>
<comment type="domain">
    <text evidence="1">Consists of two distinct domains, a catalytic core and a N-terminal extension that is involved in tRNA binding.</text>
</comment>
<comment type="similarity">
    <text evidence="1">Belongs to the class-II aminoacyl-tRNA synthetase family. Type-1 seryl-tRNA synthetase subfamily.</text>
</comment>
<proteinExistence type="inferred from homology"/>
<evidence type="ECO:0000255" key="1">
    <source>
        <dbReference type="HAMAP-Rule" id="MF_00176"/>
    </source>
</evidence>
<gene>
    <name evidence="1" type="primary">serS</name>
    <name type="ordered locus">PST_2289</name>
</gene>
<name>SYS_STUS1</name>
<organism>
    <name type="scientific">Stutzerimonas stutzeri (strain A1501)</name>
    <name type="common">Pseudomonas stutzeri</name>
    <dbReference type="NCBI Taxonomy" id="379731"/>
    <lineage>
        <taxon>Bacteria</taxon>
        <taxon>Pseudomonadati</taxon>
        <taxon>Pseudomonadota</taxon>
        <taxon>Gammaproteobacteria</taxon>
        <taxon>Pseudomonadales</taxon>
        <taxon>Pseudomonadaceae</taxon>
        <taxon>Stutzerimonas</taxon>
    </lineage>
</organism>
<dbReference type="EC" id="6.1.1.11" evidence="1"/>
<dbReference type="EMBL" id="CP000304">
    <property type="protein sequence ID" value="ABP79948.1"/>
    <property type="molecule type" value="Genomic_DNA"/>
</dbReference>
<dbReference type="RefSeq" id="WP_011913415.1">
    <property type="nucleotide sequence ID" value="NC_009434.1"/>
</dbReference>
<dbReference type="SMR" id="A4VLU7"/>
<dbReference type="KEGG" id="psa:PST_2289"/>
<dbReference type="eggNOG" id="COG0172">
    <property type="taxonomic scope" value="Bacteria"/>
</dbReference>
<dbReference type="HOGENOM" id="CLU_023797_1_1_6"/>
<dbReference type="UniPathway" id="UPA00906">
    <property type="reaction ID" value="UER00895"/>
</dbReference>
<dbReference type="Proteomes" id="UP000000233">
    <property type="component" value="Chromosome"/>
</dbReference>
<dbReference type="GO" id="GO:0005737">
    <property type="term" value="C:cytoplasm"/>
    <property type="evidence" value="ECO:0007669"/>
    <property type="project" value="UniProtKB-SubCell"/>
</dbReference>
<dbReference type="GO" id="GO:0005524">
    <property type="term" value="F:ATP binding"/>
    <property type="evidence" value="ECO:0007669"/>
    <property type="project" value="UniProtKB-UniRule"/>
</dbReference>
<dbReference type="GO" id="GO:0004828">
    <property type="term" value="F:serine-tRNA ligase activity"/>
    <property type="evidence" value="ECO:0007669"/>
    <property type="project" value="UniProtKB-UniRule"/>
</dbReference>
<dbReference type="GO" id="GO:0016260">
    <property type="term" value="P:selenocysteine biosynthetic process"/>
    <property type="evidence" value="ECO:0007669"/>
    <property type="project" value="UniProtKB-UniRule"/>
</dbReference>
<dbReference type="GO" id="GO:0006434">
    <property type="term" value="P:seryl-tRNA aminoacylation"/>
    <property type="evidence" value="ECO:0007669"/>
    <property type="project" value="UniProtKB-UniRule"/>
</dbReference>
<dbReference type="CDD" id="cd00770">
    <property type="entry name" value="SerRS_core"/>
    <property type="match status" value="1"/>
</dbReference>
<dbReference type="Gene3D" id="3.30.930.10">
    <property type="entry name" value="Bira Bifunctional Protein, Domain 2"/>
    <property type="match status" value="1"/>
</dbReference>
<dbReference type="Gene3D" id="1.10.287.40">
    <property type="entry name" value="Serine-tRNA synthetase, tRNA binding domain"/>
    <property type="match status" value="1"/>
</dbReference>
<dbReference type="HAMAP" id="MF_00176">
    <property type="entry name" value="Ser_tRNA_synth_type1"/>
    <property type="match status" value="1"/>
</dbReference>
<dbReference type="InterPro" id="IPR002314">
    <property type="entry name" value="aa-tRNA-synt_IIb"/>
</dbReference>
<dbReference type="InterPro" id="IPR006195">
    <property type="entry name" value="aa-tRNA-synth_II"/>
</dbReference>
<dbReference type="InterPro" id="IPR045864">
    <property type="entry name" value="aa-tRNA-synth_II/BPL/LPL"/>
</dbReference>
<dbReference type="InterPro" id="IPR002317">
    <property type="entry name" value="Ser-tRNA-ligase_type_1"/>
</dbReference>
<dbReference type="InterPro" id="IPR015866">
    <property type="entry name" value="Ser-tRNA-synth_1_N"/>
</dbReference>
<dbReference type="InterPro" id="IPR042103">
    <property type="entry name" value="SerRS_1_N_sf"/>
</dbReference>
<dbReference type="InterPro" id="IPR033729">
    <property type="entry name" value="SerRS_core"/>
</dbReference>
<dbReference type="InterPro" id="IPR010978">
    <property type="entry name" value="tRNA-bd_arm"/>
</dbReference>
<dbReference type="NCBIfam" id="TIGR00414">
    <property type="entry name" value="serS"/>
    <property type="match status" value="1"/>
</dbReference>
<dbReference type="PANTHER" id="PTHR43697:SF1">
    <property type="entry name" value="SERINE--TRNA LIGASE"/>
    <property type="match status" value="1"/>
</dbReference>
<dbReference type="PANTHER" id="PTHR43697">
    <property type="entry name" value="SERYL-TRNA SYNTHETASE"/>
    <property type="match status" value="1"/>
</dbReference>
<dbReference type="Pfam" id="PF02403">
    <property type="entry name" value="Seryl_tRNA_N"/>
    <property type="match status" value="1"/>
</dbReference>
<dbReference type="Pfam" id="PF00587">
    <property type="entry name" value="tRNA-synt_2b"/>
    <property type="match status" value="1"/>
</dbReference>
<dbReference type="PIRSF" id="PIRSF001529">
    <property type="entry name" value="Ser-tRNA-synth_IIa"/>
    <property type="match status" value="1"/>
</dbReference>
<dbReference type="PRINTS" id="PR00981">
    <property type="entry name" value="TRNASYNTHSER"/>
</dbReference>
<dbReference type="SUPFAM" id="SSF55681">
    <property type="entry name" value="Class II aaRS and biotin synthetases"/>
    <property type="match status" value="1"/>
</dbReference>
<dbReference type="SUPFAM" id="SSF46589">
    <property type="entry name" value="tRNA-binding arm"/>
    <property type="match status" value="1"/>
</dbReference>
<dbReference type="PROSITE" id="PS50862">
    <property type="entry name" value="AA_TRNA_LIGASE_II"/>
    <property type="match status" value="1"/>
</dbReference>
<keyword id="KW-0030">Aminoacyl-tRNA synthetase</keyword>
<keyword id="KW-0067">ATP-binding</keyword>
<keyword id="KW-0963">Cytoplasm</keyword>
<keyword id="KW-0436">Ligase</keyword>
<keyword id="KW-0547">Nucleotide-binding</keyword>
<keyword id="KW-0648">Protein biosynthesis</keyword>
<keyword id="KW-1185">Reference proteome</keyword>
<accession>A4VLU7</accession>
<feature type="chain" id="PRO_1000019781" description="Serine--tRNA ligase">
    <location>
        <begin position="1"/>
        <end position="426"/>
    </location>
</feature>
<feature type="binding site" evidence="1">
    <location>
        <begin position="233"/>
        <end position="235"/>
    </location>
    <ligand>
        <name>L-serine</name>
        <dbReference type="ChEBI" id="CHEBI:33384"/>
    </ligand>
</feature>
<feature type="binding site" evidence="1">
    <location>
        <begin position="264"/>
        <end position="266"/>
    </location>
    <ligand>
        <name>ATP</name>
        <dbReference type="ChEBI" id="CHEBI:30616"/>
    </ligand>
</feature>
<feature type="binding site" evidence="1">
    <location>
        <position position="287"/>
    </location>
    <ligand>
        <name>L-serine</name>
        <dbReference type="ChEBI" id="CHEBI:33384"/>
    </ligand>
</feature>
<feature type="binding site" evidence="1">
    <location>
        <begin position="351"/>
        <end position="354"/>
    </location>
    <ligand>
        <name>ATP</name>
        <dbReference type="ChEBI" id="CHEBI:30616"/>
    </ligand>
</feature>
<feature type="binding site" evidence="1">
    <location>
        <position position="387"/>
    </location>
    <ligand>
        <name>L-serine</name>
        <dbReference type="ChEBI" id="CHEBI:33384"/>
    </ligand>
</feature>
<sequence>MLDSKLVRTQLQDVAARLATRGYQLDVARIEALEAQRKTVQTRTEQLQAERNARSKSIGQAKQRGEDIAPLLADVDRMGSELESGKQELDRIQSELDQLMLSIPNLPHDSVPVGADEEENVEVRRWGTPKAFDFPVQDHVALGEQHGWLDFETAAKLSGARFALMRGPIARLHRALAQFMIDLHTREHGYEEAYTPYLVQAPALQGTGQLPKFEDDLFKISREGEADFYLIPTAEVSLTNIVAGEILDAKQLPLKFVAHTPCFRSEAGASGRDTRGMIRQHQFDKVEMVQIVEPSKSFEALEELTGNAEKVLQLLELPYRVLSLCTGDMGFGATKTYDLEVWVPSQDKYREISSCSNCGDFQARRMQARYRNPETGKPELVHTLNGSGLAVGRTLVAVLENYQQADGRILVPEVLKPYMGGIEVIG</sequence>